<evidence type="ECO:0000250" key="1"/>
<evidence type="ECO:0000255" key="2">
    <source>
        <dbReference type="PROSITE-ProRule" id="PRU00538"/>
    </source>
</evidence>
<evidence type="ECO:0000256" key="3">
    <source>
        <dbReference type="SAM" id="MobiDB-lite"/>
    </source>
</evidence>
<evidence type="ECO:0000305" key="4"/>
<dbReference type="EC" id="1.14.11.-"/>
<dbReference type="EC" id="1.14.11.27"/>
<dbReference type="EMBL" id="CH479192">
    <property type="protein sequence ID" value="EDW26529.1"/>
    <property type="molecule type" value="Genomic_DNA"/>
</dbReference>
<dbReference type="RefSeq" id="XP_002022494.1">
    <property type="nucleotide sequence ID" value="XM_002022458.1"/>
</dbReference>
<dbReference type="SMR" id="B4GUZ2"/>
<dbReference type="STRING" id="7234.B4GUZ2"/>
<dbReference type="EnsemblMetazoa" id="FBtr0178548">
    <property type="protein sequence ID" value="FBpp0177040"/>
    <property type="gene ID" value="FBgn0150539"/>
</dbReference>
<dbReference type="KEGG" id="dpe:6597402"/>
<dbReference type="eggNOG" id="KOG3706">
    <property type="taxonomic scope" value="Eukaryota"/>
</dbReference>
<dbReference type="HOGENOM" id="CLU_013645_2_1_1"/>
<dbReference type="OMA" id="HAIALCI"/>
<dbReference type="OrthoDB" id="425950at2759"/>
<dbReference type="PhylomeDB" id="B4GUZ2"/>
<dbReference type="Proteomes" id="UP000008744">
    <property type="component" value="Unassembled WGS sequence"/>
</dbReference>
<dbReference type="GO" id="GO:0005730">
    <property type="term" value="C:nucleolus"/>
    <property type="evidence" value="ECO:0007669"/>
    <property type="project" value="TreeGrafter"/>
</dbReference>
<dbReference type="GO" id="GO:0005634">
    <property type="term" value="C:nucleus"/>
    <property type="evidence" value="ECO:0000250"/>
    <property type="project" value="UniProtKB"/>
</dbReference>
<dbReference type="GO" id="GO:0016706">
    <property type="term" value="F:2-oxoglutarate-dependent dioxygenase activity"/>
    <property type="evidence" value="ECO:0000250"/>
    <property type="project" value="UniProtKB"/>
</dbReference>
<dbReference type="GO" id="GO:0051864">
    <property type="term" value="F:histone H3K36 demethylase activity"/>
    <property type="evidence" value="ECO:0000250"/>
    <property type="project" value="UniProtKB"/>
</dbReference>
<dbReference type="GO" id="GO:0140680">
    <property type="term" value="F:histone H3K36me/H3K36me2 demethylase activity"/>
    <property type="evidence" value="ECO:0007669"/>
    <property type="project" value="UniProtKB-EC"/>
</dbReference>
<dbReference type="GO" id="GO:0034647">
    <property type="term" value="F:histone H3K4me/H3K4me2/H3K4me3 demethylase activity"/>
    <property type="evidence" value="ECO:0000250"/>
    <property type="project" value="UniProtKB"/>
</dbReference>
<dbReference type="GO" id="GO:0005506">
    <property type="term" value="F:iron ion binding"/>
    <property type="evidence" value="ECO:0000250"/>
    <property type="project" value="UniProtKB"/>
</dbReference>
<dbReference type="GO" id="GO:0045892">
    <property type="term" value="P:negative regulation of DNA-templated transcription"/>
    <property type="evidence" value="ECO:0000250"/>
    <property type="project" value="UniProtKB"/>
</dbReference>
<dbReference type="FunFam" id="2.60.120.650:FF:000013">
    <property type="entry name" value="Ribosomal oxygenase 1"/>
    <property type="match status" value="1"/>
</dbReference>
<dbReference type="FunFam" id="1.10.10.1500:FF:000001">
    <property type="entry name" value="ribosomal oxygenase 1 isoform X1"/>
    <property type="match status" value="1"/>
</dbReference>
<dbReference type="FunFam" id="3.90.930.40:FF:000001">
    <property type="entry name" value="ribosomal oxygenase 1 isoform X1"/>
    <property type="match status" value="1"/>
</dbReference>
<dbReference type="Gene3D" id="3.90.930.40">
    <property type="match status" value="1"/>
</dbReference>
<dbReference type="Gene3D" id="2.60.120.650">
    <property type="entry name" value="Cupin"/>
    <property type="match status" value="1"/>
</dbReference>
<dbReference type="Gene3D" id="1.10.10.1500">
    <property type="entry name" value="JmjC domain-containing ribosomal oxygenase (ROX), dimer domain"/>
    <property type="match status" value="1"/>
</dbReference>
<dbReference type="InterPro" id="IPR003347">
    <property type="entry name" value="JmjC_dom"/>
</dbReference>
<dbReference type="InterPro" id="IPR039994">
    <property type="entry name" value="NO66-like"/>
</dbReference>
<dbReference type="InterPro" id="IPR049043">
    <property type="entry name" value="RIOX1/NO66-like_C_WH"/>
</dbReference>
<dbReference type="PANTHER" id="PTHR13096">
    <property type="entry name" value="MINA53 MYC INDUCED NUCLEAR ANTIGEN"/>
    <property type="match status" value="1"/>
</dbReference>
<dbReference type="PANTHER" id="PTHR13096:SF8">
    <property type="entry name" value="RIBOSOMAL OXYGENASE 1"/>
    <property type="match status" value="1"/>
</dbReference>
<dbReference type="Pfam" id="PF08007">
    <property type="entry name" value="JmjC_2"/>
    <property type="match status" value="1"/>
</dbReference>
<dbReference type="Pfam" id="PF21233">
    <property type="entry name" value="RIOX1_C_WH"/>
    <property type="match status" value="1"/>
</dbReference>
<dbReference type="SUPFAM" id="SSF51197">
    <property type="entry name" value="Clavaminate synthase-like"/>
    <property type="match status" value="1"/>
</dbReference>
<dbReference type="PROSITE" id="PS51184">
    <property type="entry name" value="JMJC"/>
    <property type="match status" value="1"/>
</dbReference>
<keyword id="KW-0156">Chromatin regulator</keyword>
<keyword id="KW-0223">Dioxygenase</keyword>
<keyword id="KW-0408">Iron</keyword>
<keyword id="KW-0479">Metal-binding</keyword>
<keyword id="KW-0539">Nucleus</keyword>
<keyword id="KW-0560">Oxidoreductase</keyword>
<keyword id="KW-1185">Reference proteome</keyword>
<keyword id="KW-0678">Repressor</keyword>
<keyword id="KW-0804">Transcription</keyword>
<keyword id="KW-0805">Transcription regulation</keyword>
<reference key="1">
    <citation type="journal article" date="2007" name="Nature">
        <title>Evolution of genes and genomes on the Drosophila phylogeny.</title>
        <authorList>
            <consortium name="Drosophila 12 genomes consortium"/>
        </authorList>
    </citation>
    <scope>NUCLEOTIDE SEQUENCE [LARGE SCALE GENOMIC DNA]</scope>
    <source>
        <strain>MSH-3 / Tucson 14011-0111.49</strain>
    </source>
</reference>
<sequence>MSDKNKKVSAFAAYRGSATSKNDVQKGTKNSDKNGAAKNNNNRNLASKNGGKQKGPPKKNGSYSDGDNGSSSSSGEDEEDDSTDSSDEYESSESGEEYTLNSHSSQSSPETPANTRESLKRRNDEAEGSNPIGAKRTSSTPVGQSTSAARSTQQPKAPSCPLQRRSCPLPSKKNTVPVKVEVASPDRALLSPQSIKKEPGASMLCRIKIGLVKSVQPGGDAGAEAGAGQAVNRLEPCHKVHKENSIEVGKRTLAQLIAPMTMATFLRDHWEKSPFRVKTTTSGGFSNLISFKMIDQMLIQNHVEYTTNIDVTSYEDGVRKTLNPDGRALPPSVWAHYQRGCSIRILNPSSYLVQLRQLCVKLQEFFHCLVGANVYLTPPESQGFAPHYDDIEAFVLQVEGKKRWRIYAPTKELPRESSGNLSQTELGDPIMDIVLKPGDLLYFPRGWIHQAITEKDSHSLHITLSAYQQQSYANLMEKLMPLVVKESVEQTLKLRKGLPLDIFQNLGVANAEWKGAHRQKLIQHIQNLAQRLVPTEGQIDRALDQLAIKFQHEALPPTIAPQELKRTVFGAQATADRNGHCSLDYELAEGTAVRLLRANIVRLTVDEGVLRCYYYTDNGLEYCKYEPNFFELEPFHGTVIETLIHAYPEYTKIKDLPPMGNDEDRLEFVEALWERGILMVEKPFKKL</sequence>
<comment type="function">
    <text evidence="1">Oxygenase that can act as both a histone lysine demethylase and a ribosomal histidine hydroxylase. Specifically demethylates 'Lys-4' (H3K4me) and 'Lys-36' (H3K36me) of histone H3, thereby playing a central role in histone code (By similarity).</text>
</comment>
<comment type="catalytic activity">
    <reaction>
        <text>N(6),N(6)-dimethyl-L-lysyl(36)-[histone H3] + 2 2-oxoglutarate + 2 O2 = L-lysyl(36)-[histone H3] + 2 formaldehyde + 2 succinate + 2 CO2</text>
        <dbReference type="Rhea" id="RHEA:42032"/>
        <dbReference type="Rhea" id="RHEA-COMP:9785"/>
        <dbReference type="Rhea" id="RHEA-COMP:9787"/>
        <dbReference type="ChEBI" id="CHEBI:15379"/>
        <dbReference type="ChEBI" id="CHEBI:16526"/>
        <dbReference type="ChEBI" id="CHEBI:16810"/>
        <dbReference type="ChEBI" id="CHEBI:16842"/>
        <dbReference type="ChEBI" id="CHEBI:29969"/>
        <dbReference type="ChEBI" id="CHEBI:30031"/>
        <dbReference type="ChEBI" id="CHEBI:61976"/>
        <dbReference type="EC" id="1.14.11.27"/>
    </reaction>
</comment>
<comment type="cofactor">
    <cofactor evidence="1">
        <name>Fe(2+)</name>
        <dbReference type="ChEBI" id="CHEBI:29033"/>
    </cofactor>
    <text evidence="1">Binds 1 Fe(2+) ion per subunit.</text>
</comment>
<comment type="subcellular location">
    <subcellularLocation>
        <location evidence="1">Nucleus</location>
    </subcellularLocation>
</comment>
<comment type="similarity">
    <text evidence="4">Belongs to the ROX family. NO66 subfamily.</text>
</comment>
<feature type="chain" id="PRO_0000390988" description="Bifunctional lysine-specific demethylase and histidyl-hydroxylase NO66">
    <location>
        <begin position="1"/>
        <end position="687"/>
    </location>
</feature>
<feature type="domain" description="JmjC" evidence="2">
    <location>
        <begin position="347"/>
        <end position="483"/>
    </location>
</feature>
<feature type="region of interest" description="Disordered" evidence="3">
    <location>
        <begin position="1"/>
        <end position="174"/>
    </location>
</feature>
<feature type="compositionally biased region" description="Basic and acidic residues" evidence="3">
    <location>
        <begin position="23"/>
        <end position="32"/>
    </location>
</feature>
<feature type="compositionally biased region" description="Low complexity" evidence="3">
    <location>
        <begin position="33"/>
        <end position="50"/>
    </location>
</feature>
<feature type="compositionally biased region" description="Low complexity" evidence="3">
    <location>
        <begin position="58"/>
        <end position="74"/>
    </location>
</feature>
<feature type="compositionally biased region" description="Acidic residues" evidence="3">
    <location>
        <begin position="75"/>
        <end position="96"/>
    </location>
</feature>
<feature type="compositionally biased region" description="Polar residues" evidence="3">
    <location>
        <begin position="100"/>
        <end position="116"/>
    </location>
</feature>
<feature type="compositionally biased region" description="Polar residues" evidence="3">
    <location>
        <begin position="136"/>
        <end position="156"/>
    </location>
</feature>
<feature type="binding site" evidence="2">
    <location>
        <position position="387"/>
    </location>
    <ligand>
        <name>Fe cation</name>
        <dbReference type="ChEBI" id="CHEBI:24875"/>
        <note>catalytic</note>
    </ligand>
</feature>
<feature type="binding site" evidence="2">
    <location>
        <position position="389"/>
    </location>
    <ligand>
        <name>Fe cation</name>
        <dbReference type="ChEBI" id="CHEBI:24875"/>
        <note>catalytic</note>
    </ligand>
</feature>
<feature type="binding site" evidence="2">
    <location>
        <position position="449"/>
    </location>
    <ligand>
        <name>Fe cation</name>
        <dbReference type="ChEBI" id="CHEBI:24875"/>
        <note>catalytic</note>
    </ligand>
</feature>
<gene>
    <name type="ORF">GL12933</name>
</gene>
<organism>
    <name type="scientific">Drosophila persimilis</name>
    <name type="common">Fruit fly</name>
    <dbReference type="NCBI Taxonomy" id="7234"/>
    <lineage>
        <taxon>Eukaryota</taxon>
        <taxon>Metazoa</taxon>
        <taxon>Ecdysozoa</taxon>
        <taxon>Arthropoda</taxon>
        <taxon>Hexapoda</taxon>
        <taxon>Insecta</taxon>
        <taxon>Pterygota</taxon>
        <taxon>Neoptera</taxon>
        <taxon>Endopterygota</taxon>
        <taxon>Diptera</taxon>
        <taxon>Brachycera</taxon>
        <taxon>Muscomorpha</taxon>
        <taxon>Ephydroidea</taxon>
        <taxon>Drosophilidae</taxon>
        <taxon>Drosophila</taxon>
        <taxon>Sophophora</taxon>
    </lineage>
</organism>
<protein>
    <recommendedName>
        <fullName>Bifunctional lysine-specific demethylase and histidyl-hydroxylase NO66</fullName>
        <ecNumber>1.14.11.-</ecNumber>
        <ecNumber>1.14.11.27</ecNumber>
    </recommendedName>
    <alternativeName>
        <fullName>Histone lysine demethylase NO66</fullName>
    </alternativeName>
</protein>
<name>NO66_DROPE</name>
<proteinExistence type="inferred from homology"/>
<accession>B4GUZ2</accession>